<gene>
    <name type="primary">yqgV</name>
    <name type="ordered locus">BSU24810</name>
</gene>
<keyword id="KW-1185">Reference proteome</keyword>
<proteinExistence type="inferred from homology"/>
<dbReference type="EMBL" id="D84432">
    <property type="protein sequence ID" value="BAA12525.1"/>
    <property type="status" value="ALT_FRAME"/>
    <property type="molecule type" value="Genomic_DNA"/>
</dbReference>
<dbReference type="EMBL" id="AL009126">
    <property type="protein sequence ID" value="CAB14412.2"/>
    <property type="molecule type" value="Genomic_DNA"/>
</dbReference>
<dbReference type="PIR" id="G69957">
    <property type="entry name" value="G69957"/>
</dbReference>
<dbReference type="RefSeq" id="NP_390361.2">
    <property type="nucleotide sequence ID" value="NC_000964.3"/>
</dbReference>
<dbReference type="RefSeq" id="WP_003230139.1">
    <property type="nucleotide sequence ID" value="NZ_OZ025638.1"/>
</dbReference>
<dbReference type="SMR" id="P54499"/>
<dbReference type="FunCoup" id="P54499">
    <property type="interactions" value="30"/>
</dbReference>
<dbReference type="STRING" id="224308.BSU24810"/>
<dbReference type="PaxDb" id="224308-BSU24810"/>
<dbReference type="EnsemblBacteria" id="CAB14412">
    <property type="protein sequence ID" value="CAB14412"/>
    <property type="gene ID" value="BSU_24810"/>
</dbReference>
<dbReference type="GeneID" id="938212"/>
<dbReference type="KEGG" id="bsu:BSU24810"/>
<dbReference type="PATRIC" id="fig|224308.179.peg.2700"/>
<dbReference type="eggNOG" id="COG0011">
    <property type="taxonomic scope" value="Bacteria"/>
</dbReference>
<dbReference type="InParanoid" id="P54499"/>
<dbReference type="OrthoDB" id="2147383at2"/>
<dbReference type="PhylomeDB" id="P54499"/>
<dbReference type="BioCyc" id="BSUB:BSU24810-MONOMER"/>
<dbReference type="Proteomes" id="UP000001570">
    <property type="component" value="Chromosome"/>
</dbReference>
<dbReference type="Gene3D" id="3.30.70.930">
    <property type="match status" value="1"/>
</dbReference>
<dbReference type="InterPro" id="IPR029756">
    <property type="entry name" value="MTH1187/YkoF-like"/>
</dbReference>
<dbReference type="InterPro" id="IPR002767">
    <property type="entry name" value="Thiamine_BP"/>
</dbReference>
<dbReference type="InterPro" id="IPR051614">
    <property type="entry name" value="UPF0045_domain"/>
</dbReference>
<dbReference type="NCBIfam" id="TIGR00106">
    <property type="entry name" value="MTH1187 family thiamine-binding protein"/>
    <property type="match status" value="1"/>
</dbReference>
<dbReference type="PANTHER" id="PTHR33777">
    <property type="entry name" value="UPF0045 PROTEIN ECM15"/>
    <property type="match status" value="1"/>
</dbReference>
<dbReference type="PANTHER" id="PTHR33777:SF1">
    <property type="entry name" value="UPF0045 PROTEIN ECM15"/>
    <property type="match status" value="1"/>
</dbReference>
<dbReference type="Pfam" id="PF01910">
    <property type="entry name" value="Thiamine_BP"/>
    <property type="match status" value="1"/>
</dbReference>
<dbReference type="SUPFAM" id="SSF89957">
    <property type="entry name" value="MTH1187/YkoF-like"/>
    <property type="match status" value="1"/>
</dbReference>
<sequence length="104" mass="11572">MAIADVTIIPIGTETPSVSAYVADVQKILEGYQAEGKIKYQLTPMNTLIEGELSDLFAVIQAIHEAPFQKGLHRVATNIRIDDRRDKKTTLESKIESVNKHLQP</sequence>
<name>YQGV_BACSU</name>
<evidence type="ECO:0000305" key="1"/>
<protein>
    <recommendedName>
        <fullName>UPF0045 protein YqgV</fullName>
    </recommendedName>
</protein>
<feature type="chain" id="PRO_0000147622" description="UPF0045 protein YqgV">
    <location>
        <begin position="1"/>
        <end position="104"/>
    </location>
</feature>
<comment type="similarity">
    <text evidence="1">Belongs to the UPF0045 family.</text>
</comment>
<comment type="sequence caution" evidence="1">
    <conflict type="frameshift">
        <sequence resource="EMBL-CDS" id="BAA12525"/>
    </conflict>
</comment>
<accession>P54499</accession>
<organism>
    <name type="scientific">Bacillus subtilis (strain 168)</name>
    <dbReference type="NCBI Taxonomy" id="224308"/>
    <lineage>
        <taxon>Bacteria</taxon>
        <taxon>Bacillati</taxon>
        <taxon>Bacillota</taxon>
        <taxon>Bacilli</taxon>
        <taxon>Bacillales</taxon>
        <taxon>Bacillaceae</taxon>
        <taxon>Bacillus</taxon>
    </lineage>
</organism>
<reference key="1">
    <citation type="journal article" date="1996" name="Microbiology">
        <title>Systematic sequencing of the 283 kb 210 degrees-232 degrees region of the Bacillus subtilis genome containing the skin element and many sporulation genes.</title>
        <authorList>
            <person name="Mizuno M."/>
            <person name="Masuda S."/>
            <person name="Takemaru K."/>
            <person name="Hosono S."/>
            <person name="Sato T."/>
            <person name="Takeuchi M."/>
            <person name="Kobayashi Y."/>
        </authorList>
    </citation>
    <scope>NUCLEOTIDE SEQUENCE [GENOMIC DNA]</scope>
    <source>
        <strain>168 / JH642</strain>
    </source>
</reference>
<reference key="2">
    <citation type="journal article" date="1997" name="Nature">
        <title>The complete genome sequence of the Gram-positive bacterium Bacillus subtilis.</title>
        <authorList>
            <person name="Kunst F."/>
            <person name="Ogasawara N."/>
            <person name="Moszer I."/>
            <person name="Albertini A.M."/>
            <person name="Alloni G."/>
            <person name="Azevedo V."/>
            <person name="Bertero M.G."/>
            <person name="Bessieres P."/>
            <person name="Bolotin A."/>
            <person name="Borchert S."/>
            <person name="Borriss R."/>
            <person name="Boursier L."/>
            <person name="Brans A."/>
            <person name="Braun M."/>
            <person name="Brignell S.C."/>
            <person name="Bron S."/>
            <person name="Brouillet S."/>
            <person name="Bruschi C.V."/>
            <person name="Caldwell B."/>
            <person name="Capuano V."/>
            <person name="Carter N.M."/>
            <person name="Choi S.-K."/>
            <person name="Codani J.-J."/>
            <person name="Connerton I.F."/>
            <person name="Cummings N.J."/>
            <person name="Daniel R.A."/>
            <person name="Denizot F."/>
            <person name="Devine K.M."/>
            <person name="Duesterhoeft A."/>
            <person name="Ehrlich S.D."/>
            <person name="Emmerson P.T."/>
            <person name="Entian K.-D."/>
            <person name="Errington J."/>
            <person name="Fabret C."/>
            <person name="Ferrari E."/>
            <person name="Foulger D."/>
            <person name="Fritz C."/>
            <person name="Fujita M."/>
            <person name="Fujita Y."/>
            <person name="Fuma S."/>
            <person name="Galizzi A."/>
            <person name="Galleron N."/>
            <person name="Ghim S.-Y."/>
            <person name="Glaser P."/>
            <person name="Goffeau A."/>
            <person name="Golightly E.J."/>
            <person name="Grandi G."/>
            <person name="Guiseppi G."/>
            <person name="Guy B.J."/>
            <person name="Haga K."/>
            <person name="Haiech J."/>
            <person name="Harwood C.R."/>
            <person name="Henaut A."/>
            <person name="Hilbert H."/>
            <person name="Holsappel S."/>
            <person name="Hosono S."/>
            <person name="Hullo M.-F."/>
            <person name="Itaya M."/>
            <person name="Jones L.-M."/>
            <person name="Joris B."/>
            <person name="Karamata D."/>
            <person name="Kasahara Y."/>
            <person name="Klaerr-Blanchard M."/>
            <person name="Klein C."/>
            <person name="Kobayashi Y."/>
            <person name="Koetter P."/>
            <person name="Koningstein G."/>
            <person name="Krogh S."/>
            <person name="Kumano M."/>
            <person name="Kurita K."/>
            <person name="Lapidus A."/>
            <person name="Lardinois S."/>
            <person name="Lauber J."/>
            <person name="Lazarevic V."/>
            <person name="Lee S.-M."/>
            <person name="Levine A."/>
            <person name="Liu H."/>
            <person name="Masuda S."/>
            <person name="Mauel C."/>
            <person name="Medigue C."/>
            <person name="Medina N."/>
            <person name="Mellado R.P."/>
            <person name="Mizuno M."/>
            <person name="Moestl D."/>
            <person name="Nakai S."/>
            <person name="Noback M."/>
            <person name="Noone D."/>
            <person name="O'Reilly M."/>
            <person name="Ogawa K."/>
            <person name="Ogiwara A."/>
            <person name="Oudega B."/>
            <person name="Park S.-H."/>
            <person name="Parro V."/>
            <person name="Pohl T.M."/>
            <person name="Portetelle D."/>
            <person name="Porwollik S."/>
            <person name="Prescott A.M."/>
            <person name="Presecan E."/>
            <person name="Pujic P."/>
            <person name="Purnelle B."/>
            <person name="Rapoport G."/>
            <person name="Rey M."/>
            <person name="Reynolds S."/>
            <person name="Rieger M."/>
            <person name="Rivolta C."/>
            <person name="Rocha E."/>
            <person name="Roche B."/>
            <person name="Rose M."/>
            <person name="Sadaie Y."/>
            <person name="Sato T."/>
            <person name="Scanlan E."/>
            <person name="Schleich S."/>
            <person name="Schroeter R."/>
            <person name="Scoffone F."/>
            <person name="Sekiguchi J."/>
            <person name="Sekowska A."/>
            <person name="Seror S.J."/>
            <person name="Serror P."/>
            <person name="Shin B.-S."/>
            <person name="Soldo B."/>
            <person name="Sorokin A."/>
            <person name="Tacconi E."/>
            <person name="Takagi T."/>
            <person name="Takahashi H."/>
            <person name="Takemaru K."/>
            <person name="Takeuchi M."/>
            <person name="Tamakoshi A."/>
            <person name="Tanaka T."/>
            <person name="Terpstra P."/>
            <person name="Tognoni A."/>
            <person name="Tosato V."/>
            <person name="Uchiyama S."/>
            <person name="Vandenbol M."/>
            <person name="Vannier F."/>
            <person name="Vassarotti A."/>
            <person name="Viari A."/>
            <person name="Wambutt R."/>
            <person name="Wedler E."/>
            <person name="Wedler H."/>
            <person name="Weitzenegger T."/>
            <person name="Winters P."/>
            <person name="Wipat A."/>
            <person name="Yamamoto H."/>
            <person name="Yamane K."/>
            <person name="Yasumoto K."/>
            <person name="Yata K."/>
            <person name="Yoshida K."/>
            <person name="Yoshikawa H.-F."/>
            <person name="Zumstein E."/>
            <person name="Yoshikawa H."/>
            <person name="Danchin A."/>
        </authorList>
    </citation>
    <scope>NUCLEOTIDE SEQUENCE [LARGE SCALE GENOMIC DNA]</scope>
    <source>
        <strain>168</strain>
    </source>
</reference>
<reference key="3">
    <citation type="journal article" date="2009" name="Microbiology">
        <title>From a consortium sequence to a unified sequence: the Bacillus subtilis 168 reference genome a decade later.</title>
        <authorList>
            <person name="Barbe V."/>
            <person name="Cruveiller S."/>
            <person name="Kunst F."/>
            <person name="Lenoble P."/>
            <person name="Meurice G."/>
            <person name="Sekowska A."/>
            <person name="Vallenet D."/>
            <person name="Wang T."/>
            <person name="Moszer I."/>
            <person name="Medigue C."/>
            <person name="Danchin A."/>
        </authorList>
    </citation>
    <scope>SEQUENCE REVISION TO C-TERMINUS</scope>
</reference>